<evidence type="ECO:0000250" key="1">
    <source>
        <dbReference type="UniProtKB" id="O74213"/>
    </source>
</evidence>
<evidence type="ECO:0000255" key="2"/>
<evidence type="ECO:0000255" key="3">
    <source>
        <dbReference type="PROSITE-ProRule" id="PRU00498"/>
    </source>
</evidence>
<evidence type="ECO:0000255" key="4">
    <source>
        <dbReference type="PROSITE-ProRule" id="PRU10052"/>
    </source>
</evidence>
<evidence type="ECO:0000269" key="5">
    <source>
    </source>
</evidence>
<evidence type="ECO:0000305" key="6"/>
<keyword id="KW-0134">Cell wall</keyword>
<keyword id="KW-0961">Cell wall biogenesis/degradation</keyword>
<keyword id="KW-0903">Direct protein sequencing</keyword>
<keyword id="KW-1015">Disulfide bond</keyword>
<keyword id="KW-0325">Glycoprotein</keyword>
<keyword id="KW-0326">Glycosidase</keyword>
<keyword id="KW-0378">Hydrolase</keyword>
<keyword id="KW-1185">Reference proteome</keyword>
<keyword id="KW-0677">Repeat</keyword>
<keyword id="KW-0964">Secreted</keyword>
<keyword id="KW-0732">Signal</keyword>
<sequence>MACTNNAMRALFLLVLFCIVHGEKEESKGIDAKASGPGGSFDITKLGASGNGKTDSTKAVQEAWASACGGTGKQTILIPKGDFLVGQLNFTGPCKGDVTIQVDGNLLATTDLSQYKDHGNWIEILRVDNLVITGKGNLDGQGPAVWSKNSCTKKYDCKILPNSLVMDFVNNGEVSGVTLLNSKFFHMNMYRCKDMLIKDVTVTAPGDSPNTDGIHMGDSSGITITNTVIGVGDDCISIGPGTSKVNITGVTCGPGHGISIGSLGRYKDEKDVTDINVKDCTLKKTMFGVRIKAYEDAASVLTVSKIHYENIKMEDSANPIFIDMKYCPNKLCTANGASKVTVKDVTFKNITGTSSTPEAVSLLCTAKVPCTGVTMDDVNVEYSGTNNKTMAICTNAKGSTKGCLKELACF</sequence>
<name>PGLR1_MAIZE</name>
<gene>
    <name type="primary">PG1</name>
</gene>
<gene>
    <name type="primary">PG2</name>
</gene>
<gene>
    <name type="primary">PG3</name>
</gene>
<gene>
    <name type="primary">PG6</name>
</gene>
<gene>
    <name type="primary">PG14</name>
</gene>
<accession>P26216</accession>
<organism>
    <name type="scientific">Zea mays</name>
    <name type="common">Maize</name>
    <dbReference type="NCBI Taxonomy" id="4577"/>
    <lineage>
        <taxon>Eukaryota</taxon>
        <taxon>Viridiplantae</taxon>
        <taxon>Streptophyta</taxon>
        <taxon>Embryophyta</taxon>
        <taxon>Tracheophyta</taxon>
        <taxon>Spermatophyta</taxon>
        <taxon>Magnoliopsida</taxon>
        <taxon>Liliopsida</taxon>
        <taxon>Poales</taxon>
        <taxon>Poaceae</taxon>
        <taxon>PACMAD clade</taxon>
        <taxon>Panicoideae</taxon>
        <taxon>Andropogonodae</taxon>
        <taxon>Andropogoneae</taxon>
        <taxon>Tripsacinae</taxon>
        <taxon>Zea</taxon>
    </lineage>
</organism>
<protein>
    <recommendedName>
        <fullName>Exopolygalacturonase</fullName>
        <shortName>ExoPG</shortName>
        <ecNumber>3.2.1.67</ecNumber>
    </recommendedName>
    <alternativeName>
        <fullName>Galacturan 1,4-alpha-galacturonidase</fullName>
    </alternativeName>
    <alternativeName>
        <fullName>Pectinase</fullName>
    </alternativeName>
</protein>
<dbReference type="EC" id="3.2.1.67"/>
<dbReference type="EMBL" id="X57627">
    <property type="protein sequence ID" value="CAA40850.1"/>
    <property type="molecule type" value="mRNA"/>
</dbReference>
<dbReference type="EMBL" id="X57628">
    <property type="protein sequence ID" value="CAA40851.1"/>
    <property type="molecule type" value="mRNA"/>
</dbReference>
<dbReference type="EMBL" id="X57743">
    <property type="protein sequence ID" value="CAA40910.1"/>
    <property type="molecule type" value="mRNA"/>
</dbReference>
<dbReference type="EMBL" id="X57575">
    <property type="protein sequence ID" value="CAA40803.1"/>
    <property type="molecule type" value="mRNA"/>
</dbReference>
<dbReference type="EMBL" id="X65844">
    <property type="protein sequence ID" value="CAA46679.1"/>
    <property type="molecule type" value="Genomic_DNA"/>
</dbReference>
<dbReference type="EMBL" id="X65845">
    <property type="protein sequence ID" value="CAA46680.1"/>
    <property type="molecule type" value="Genomic_DNA"/>
</dbReference>
<dbReference type="EMBL" id="X62384">
    <property type="protein sequence ID" value="CAA44248.1"/>
    <property type="molecule type" value="Genomic_DNA"/>
</dbReference>
<dbReference type="EMBL" id="X62385">
    <property type="protein sequence ID" value="CAA44249.1"/>
    <property type="molecule type" value="Genomic_DNA"/>
</dbReference>
<dbReference type="EMBL" id="X66692">
    <property type="protein sequence ID" value="CAA47234.1"/>
    <property type="molecule type" value="Genomic_DNA"/>
</dbReference>
<dbReference type="PIR" id="S18570">
    <property type="entry name" value="S18570"/>
</dbReference>
<dbReference type="PIR" id="S25824">
    <property type="entry name" value="S25824"/>
</dbReference>
<dbReference type="PIR" id="S30064">
    <property type="entry name" value="S30064"/>
</dbReference>
<dbReference type="RefSeq" id="NP_001105432.1">
    <property type="nucleotide sequence ID" value="NM_001111962.1"/>
</dbReference>
<dbReference type="RefSeq" id="XP_008649076.1">
    <property type="nucleotide sequence ID" value="XM_008650854.1"/>
</dbReference>
<dbReference type="SMR" id="P26216"/>
<dbReference type="FunCoup" id="P26216">
    <property type="interactions" value="75"/>
</dbReference>
<dbReference type="STRING" id="4577.P26216"/>
<dbReference type="Allergome" id="683">
    <property type="allergen name" value="Zea m 13"/>
</dbReference>
<dbReference type="CAZy" id="GH28">
    <property type="family name" value="Glycoside Hydrolase Family 28"/>
</dbReference>
<dbReference type="GlyCosmos" id="P26216">
    <property type="glycosylation" value="4 sites, No reported glycans"/>
</dbReference>
<dbReference type="PaxDb" id="4577-GRMZM2G320175_P01"/>
<dbReference type="EnsemblPlants" id="Zm00001eb275980_T001">
    <property type="protein sequence ID" value="Zm00001eb275980_P001"/>
    <property type="gene ID" value="Zm00001eb275980"/>
</dbReference>
<dbReference type="EnsemblPlants" id="Zm00001eb276010_T001">
    <property type="protein sequence ID" value="Zm00001eb276010_P001"/>
    <property type="gene ID" value="Zm00001eb276010"/>
</dbReference>
<dbReference type="EnsemblPlants" id="Zm00001eb276020_T001">
    <property type="protein sequence ID" value="Zm00001eb276020_P001"/>
    <property type="gene ID" value="Zm00001eb276020"/>
</dbReference>
<dbReference type="EnsemblPlants" id="Zm00001eb276030_T001">
    <property type="protein sequence ID" value="Zm00001eb276030_P001"/>
    <property type="gene ID" value="Zm00001eb276030"/>
</dbReference>
<dbReference type="EnsemblPlants" id="Zm00001eb276060_T001">
    <property type="protein sequence ID" value="Zm00001eb276060_P001"/>
    <property type="gene ID" value="Zm00001eb276060"/>
</dbReference>
<dbReference type="EnsemblPlants" id="Zm00001eb276090_T001">
    <property type="protein sequence ID" value="Zm00001eb276090_P001"/>
    <property type="gene ID" value="Zm00001eb276090"/>
</dbReference>
<dbReference type="EnsemblPlants" id="Zm00001eb442160_T001">
    <property type="protein sequence ID" value="Zm00001eb442160_P001"/>
    <property type="gene ID" value="Zm00001eb442160"/>
</dbReference>
<dbReference type="GeneID" id="542387"/>
<dbReference type="Gramene" id="Zm00001eb275980_T001">
    <property type="protein sequence ID" value="Zm00001eb275980_P001"/>
    <property type="gene ID" value="Zm00001eb275980"/>
</dbReference>
<dbReference type="Gramene" id="Zm00001eb276010_T001">
    <property type="protein sequence ID" value="Zm00001eb276010_P001"/>
    <property type="gene ID" value="Zm00001eb276010"/>
</dbReference>
<dbReference type="Gramene" id="Zm00001eb276020_T001">
    <property type="protein sequence ID" value="Zm00001eb276020_P001"/>
    <property type="gene ID" value="Zm00001eb276020"/>
</dbReference>
<dbReference type="Gramene" id="Zm00001eb276030_T001">
    <property type="protein sequence ID" value="Zm00001eb276030_P001"/>
    <property type="gene ID" value="Zm00001eb276030"/>
</dbReference>
<dbReference type="Gramene" id="Zm00001eb276060_T001">
    <property type="protein sequence ID" value="Zm00001eb276060_P001"/>
    <property type="gene ID" value="Zm00001eb276060"/>
</dbReference>
<dbReference type="Gramene" id="Zm00001eb276090_T001">
    <property type="protein sequence ID" value="Zm00001eb276090_P001"/>
    <property type="gene ID" value="Zm00001eb276090"/>
</dbReference>
<dbReference type="Gramene" id="Zm00001eb442160_T001">
    <property type="protein sequence ID" value="Zm00001eb442160_P001"/>
    <property type="gene ID" value="Zm00001eb442160"/>
</dbReference>
<dbReference type="KEGG" id="zma:103629733"/>
<dbReference type="KEGG" id="zma:542387"/>
<dbReference type="MaizeGDB" id="25864"/>
<dbReference type="eggNOG" id="ENOG502QRSR">
    <property type="taxonomic scope" value="Eukaryota"/>
</dbReference>
<dbReference type="HOGENOM" id="CLU_016031_2_2_1"/>
<dbReference type="InParanoid" id="P26216"/>
<dbReference type="OMA" id="MACTNNA"/>
<dbReference type="OrthoDB" id="640420at2759"/>
<dbReference type="Proteomes" id="UP000007305">
    <property type="component" value="Chromosome 6"/>
</dbReference>
<dbReference type="Proteomes" id="UP000007305">
    <property type="component" value="Unassembled WGS sequence"/>
</dbReference>
<dbReference type="ExpressionAtlas" id="P26216">
    <property type="expression patterns" value="baseline and differential"/>
</dbReference>
<dbReference type="GO" id="GO:0005576">
    <property type="term" value="C:extracellular region"/>
    <property type="evidence" value="ECO:0007669"/>
    <property type="project" value="UniProtKB-SubCell"/>
</dbReference>
<dbReference type="GO" id="GO:0047911">
    <property type="term" value="F:galacturan 1,4-alpha-galacturonidase activity"/>
    <property type="evidence" value="ECO:0007669"/>
    <property type="project" value="UniProtKB-EC"/>
</dbReference>
<dbReference type="GO" id="GO:0004650">
    <property type="term" value="F:polygalacturonase activity"/>
    <property type="evidence" value="ECO:0007669"/>
    <property type="project" value="InterPro"/>
</dbReference>
<dbReference type="GO" id="GO:0005975">
    <property type="term" value="P:carbohydrate metabolic process"/>
    <property type="evidence" value="ECO:0007669"/>
    <property type="project" value="InterPro"/>
</dbReference>
<dbReference type="GO" id="GO:0071555">
    <property type="term" value="P:cell wall organization"/>
    <property type="evidence" value="ECO:0007669"/>
    <property type="project" value="UniProtKB-KW"/>
</dbReference>
<dbReference type="FunFam" id="2.160.20.10:FF:000004">
    <property type="entry name" value="Pectin lyase-like superfamily protein"/>
    <property type="match status" value="1"/>
</dbReference>
<dbReference type="Gene3D" id="2.160.20.10">
    <property type="entry name" value="Single-stranded right-handed beta-helix, Pectin lyase-like"/>
    <property type="match status" value="1"/>
</dbReference>
<dbReference type="InterPro" id="IPR000743">
    <property type="entry name" value="Glyco_hydro_28"/>
</dbReference>
<dbReference type="InterPro" id="IPR006626">
    <property type="entry name" value="PbH1"/>
</dbReference>
<dbReference type="InterPro" id="IPR012334">
    <property type="entry name" value="Pectin_lyas_fold"/>
</dbReference>
<dbReference type="InterPro" id="IPR011050">
    <property type="entry name" value="Pectin_lyase_fold/virulence"/>
</dbReference>
<dbReference type="PANTHER" id="PTHR31375">
    <property type="match status" value="1"/>
</dbReference>
<dbReference type="Pfam" id="PF00295">
    <property type="entry name" value="Glyco_hydro_28"/>
    <property type="match status" value="1"/>
</dbReference>
<dbReference type="SMART" id="SM00710">
    <property type="entry name" value="PbH1"/>
    <property type="match status" value="5"/>
</dbReference>
<dbReference type="SUPFAM" id="SSF51126">
    <property type="entry name" value="Pectin lyase-like"/>
    <property type="match status" value="1"/>
</dbReference>
<dbReference type="PROSITE" id="PS00502">
    <property type="entry name" value="POLYGALACTURONASE"/>
    <property type="match status" value="1"/>
</dbReference>
<feature type="signal peptide" evidence="5">
    <location>
        <begin position="1"/>
        <end position="22"/>
    </location>
</feature>
<feature type="chain" id="PRO_0000024806" description="Exopolygalacturonase">
    <location>
        <begin position="23"/>
        <end position="410"/>
    </location>
</feature>
<feature type="repeat" description="PbH1 1" evidence="2">
    <location>
        <begin position="192"/>
        <end position="218"/>
    </location>
</feature>
<feature type="repeat" description="PbH1 2" evidence="2">
    <location>
        <begin position="219"/>
        <end position="240"/>
    </location>
</feature>
<feature type="repeat" description="PbH1 3" evidence="2">
    <location>
        <begin position="242"/>
        <end position="262"/>
    </location>
</feature>
<feature type="repeat" description="PbH1 4" evidence="2">
    <location>
        <begin position="272"/>
        <end position="293"/>
    </location>
</feature>
<feature type="repeat" description="PbH1 5" evidence="2">
    <location>
        <begin position="337"/>
        <end position="377"/>
    </location>
</feature>
<feature type="active site" description="Proton donor" evidence="1">
    <location>
        <position position="233"/>
    </location>
</feature>
<feature type="active site" evidence="4">
    <location>
        <position position="256"/>
    </location>
</feature>
<feature type="glycosylation site" description="N-linked (GlcNAc...) asparagine" evidence="3">
    <location>
        <position position="89"/>
    </location>
</feature>
<feature type="glycosylation site" description="N-linked (GlcNAc...) asparagine" evidence="3">
    <location>
        <position position="246"/>
    </location>
</feature>
<feature type="glycosylation site" description="N-linked (GlcNAc...) asparagine" evidence="3">
    <location>
        <position position="349"/>
    </location>
</feature>
<feature type="glycosylation site" description="N-linked (GlcNAc...) asparagine" evidence="3">
    <location>
        <position position="387"/>
    </location>
</feature>
<feature type="disulfide bond" evidence="1">
    <location>
        <begin position="235"/>
        <end position="252"/>
    </location>
</feature>
<feature type="disulfide bond" evidence="1">
    <location>
        <begin position="364"/>
        <end position="370"/>
    </location>
</feature>
<feature type="disulfide bond" evidence="1">
    <location>
        <begin position="393"/>
        <end position="409"/>
    </location>
</feature>
<feature type="sequence variant" description="In PG14.">
    <original>A</original>
    <variation>V</variation>
    <location>
        <position position="359"/>
    </location>
</feature>
<comment type="function">
    <text>May function in depolymerizing pectin during pollen development, germination, and tube growth. Acts as an exo-polygalacturonase.</text>
</comment>
<comment type="catalytic activity">
    <reaction>
        <text>[(1-&gt;4)-alpha-D-galacturonosyl](n) + H2O = alpha-D-galacturonate + [(1-&gt;4)-alpha-D-galacturonosyl](n-1)</text>
        <dbReference type="Rhea" id="RHEA:14117"/>
        <dbReference type="Rhea" id="RHEA-COMP:14570"/>
        <dbReference type="Rhea" id="RHEA-COMP:14572"/>
        <dbReference type="ChEBI" id="CHEBI:15377"/>
        <dbReference type="ChEBI" id="CHEBI:58658"/>
        <dbReference type="ChEBI" id="CHEBI:140523"/>
        <dbReference type="EC" id="3.2.1.67"/>
    </reaction>
</comment>
<comment type="subcellular location">
    <subcellularLocation>
        <location>Secreted</location>
    </subcellularLocation>
    <subcellularLocation>
        <location>Secreted</location>
        <location>Cell wall</location>
    </subcellularLocation>
</comment>
<comment type="tissue specificity">
    <text>Pollen.</text>
</comment>
<comment type="developmental stage">
    <text>Late stages of pollen development.</text>
</comment>
<comment type="similarity">
    <text evidence="6">Belongs to the glycosyl hydrolase 28 family.</text>
</comment>
<proteinExistence type="evidence at protein level"/>
<reference key="1">
    <citation type="journal article" date="1991" name="Plant Mol. Biol.">
        <title>Characterization of pollen polygalacturonase encoded by several cDNA clones in maize.</title>
        <authorList>
            <person name="Niogret M.F."/>
            <person name="Dubald M."/>
            <person name="Mandaron P."/>
            <person name="Mache R."/>
        </authorList>
    </citation>
    <scope>NUCLEOTIDE SEQUENCE [MRNA]</scope>
    <scope>PROTEIN SEQUENCE OF 23-37</scope>
    <source>
        <strain>cv. Missouri 17</strain>
        <tissue>Pollen</tissue>
    </source>
</reference>
<reference key="2">
    <citation type="journal article" date="1993" name="J. Mol. Biol.">
        <title>Characterization of a multigene family encoding an exopolygalacturonase in maize.</title>
        <authorList>
            <person name="Barakate A."/>
            <person name="Martin W."/>
            <person name="Quigley F."/>
            <person name="Mache R."/>
        </authorList>
    </citation>
    <scope>NUCLEOTIDE SEQUENCE [GENOMIC DNA]</scope>
    <source>
        <strain>cv. Missouri 17</strain>
        <tissue>Leaf</tissue>
    </source>
</reference>
<reference key="3">
    <citation type="journal article" date="1992" name="Plant Mol. Biol.">
        <title>Sequence analysis of three members of the maize polygalacturonase gene family expressed during pollen development.</title>
        <authorList>
            <person name="Allen R.L."/>
            <person name="Lonsdale D.M."/>
        </authorList>
    </citation>
    <scope>NUCLEOTIDE SEQUENCE [GENOMIC DNA]</scope>
    <source>
        <strain>cv. B73</strain>
        <strain>cv. Wisconsin 22</strain>
    </source>
</reference>
<reference key="4">
    <citation type="journal article" date="1993" name="Plant J.">
        <title>Molecular characterization of one of the maize polygalacturonase gene family members which are expressed during late pollen development.</title>
        <authorList>
            <person name="Allen R.L."/>
            <person name="Lonsdale D.M."/>
        </authorList>
    </citation>
    <scope>NUCLEOTIDE SEQUENCE [GENOMIC DNA] OF 1-306</scope>
</reference>